<proteinExistence type="inferred from homology"/>
<evidence type="ECO:0000255" key="1">
    <source>
        <dbReference type="HAMAP-Rule" id="MF_00361"/>
    </source>
</evidence>
<sequence>MYKKIGIIYHPLNPAACDLAIKLAAKLDSLGIENWSDSAWQADKLTPKMQNTQLILTTGGDGTILRTAHAILPLEIPILSVNLGKVGFMTELSPEDAISGLEKVLAGDGWIDERSLLEAEYLPHDSAQSRQFFVMNDAVVARGQVARVICVSVDINSQPFTTYKADGAIVSTATGSTGYSYAAGGPVLQPNSADIILTPILPHLGRGYSLVLPSDSIVDLKVNTWHEATLSIDGFINMQVSSGDTLRLRQSSKKIQFIRLRPENYFYKGLDTKLKGNNESVYDR</sequence>
<protein>
    <recommendedName>
        <fullName evidence="1">NAD kinase</fullName>
        <ecNumber evidence="1">2.7.1.23</ecNumber>
    </recommendedName>
    <alternativeName>
        <fullName evidence="1">ATP-dependent NAD kinase</fullName>
    </alternativeName>
</protein>
<name>NAK_DEHMB</name>
<gene>
    <name evidence="1" type="primary">nadK</name>
    <name type="ordered locus">DehaBAV1_0435</name>
</gene>
<keyword id="KW-0067">ATP-binding</keyword>
<keyword id="KW-0963">Cytoplasm</keyword>
<keyword id="KW-0418">Kinase</keyword>
<keyword id="KW-0520">NAD</keyword>
<keyword id="KW-0521">NADP</keyword>
<keyword id="KW-0547">Nucleotide-binding</keyword>
<keyword id="KW-0808">Transferase</keyword>
<dbReference type="EC" id="2.7.1.23" evidence="1"/>
<dbReference type="EMBL" id="CP000688">
    <property type="protein sequence ID" value="ABQ17020.1"/>
    <property type="molecule type" value="Genomic_DNA"/>
</dbReference>
<dbReference type="SMR" id="A5FS02"/>
<dbReference type="KEGG" id="deb:DehaBAV1_0435"/>
<dbReference type="PATRIC" id="fig|216389.18.peg.478"/>
<dbReference type="HOGENOM" id="CLU_008831_0_1_0"/>
<dbReference type="GO" id="GO:0005737">
    <property type="term" value="C:cytoplasm"/>
    <property type="evidence" value="ECO:0007669"/>
    <property type="project" value="UniProtKB-SubCell"/>
</dbReference>
<dbReference type="GO" id="GO:0005524">
    <property type="term" value="F:ATP binding"/>
    <property type="evidence" value="ECO:0007669"/>
    <property type="project" value="UniProtKB-KW"/>
</dbReference>
<dbReference type="GO" id="GO:0046872">
    <property type="term" value="F:metal ion binding"/>
    <property type="evidence" value="ECO:0007669"/>
    <property type="project" value="UniProtKB-UniRule"/>
</dbReference>
<dbReference type="GO" id="GO:0051287">
    <property type="term" value="F:NAD binding"/>
    <property type="evidence" value="ECO:0007669"/>
    <property type="project" value="UniProtKB-ARBA"/>
</dbReference>
<dbReference type="GO" id="GO:0003951">
    <property type="term" value="F:NAD+ kinase activity"/>
    <property type="evidence" value="ECO:0007669"/>
    <property type="project" value="UniProtKB-UniRule"/>
</dbReference>
<dbReference type="GO" id="GO:0019674">
    <property type="term" value="P:NAD metabolic process"/>
    <property type="evidence" value="ECO:0007669"/>
    <property type="project" value="InterPro"/>
</dbReference>
<dbReference type="GO" id="GO:0006741">
    <property type="term" value="P:NADP biosynthetic process"/>
    <property type="evidence" value="ECO:0007669"/>
    <property type="project" value="UniProtKB-UniRule"/>
</dbReference>
<dbReference type="Gene3D" id="3.40.50.10330">
    <property type="entry name" value="Probable inorganic polyphosphate/atp-NAD kinase, domain 1"/>
    <property type="match status" value="1"/>
</dbReference>
<dbReference type="Gene3D" id="2.60.200.30">
    <property type="entry name" value="Probable inorganic polyphosphate/atp-NAD kinase, domain 2"/>
    <property type="match status" value="1"/>
</dbReference>
<dbReference type="HAMAP" id="MF_00361">
    <property type="entry name" value="NAD_kinase"/>
    <property type="match status" value="1"/>
</dbReference>
<dbReference type="InterPro" id="IPR017438">
    <property type="entry name" value="ATP-NAD_kinase_N"/>
</dbReference>
<dbReference type="InterPro" id="IPR017437">
    <property type="entry name" value="ATP-NAD_kinase_PpnK-typ_C"/>
</dbReference>
<dbReference type="InterPro" id="IPR016064">
    <property type="entry name" value="NAD/diacylglycerol_kinase_sf"/>
</dbReference>
<dbReference type="InterPro" id="IPR002504">
    <property type="entry name" value="NADK"/>
</dbReference>
<dbReference type="PANTHER" id="PTHR20275">
    <property type="entry name" value="NAD KINASE"/>
    <property type="match status" value="1"/>
</dbReference>
<dbReference type="PANTHER" id="PTHR20275:SF0">
    <property type="entry name" value="NAD KINASE"/>
    <property type="match status" value="1"/>
</dbReference>
<dbReference type="Pfam" id="PF01513">
    <property type="entry name" value="NAD_kinase"/>
    <property type="match status" value="1"/>
</dbReference>
<dbReference type="Pfam" id="PF20143">
    <property type="entry name" value="NAD_kinase_C"/>
    <property type="match status" value="1"/>
</dbReference>
<dbReference type="SUPFAM" id="SSF111331">
    <property type="entry name" value="NAD kinase/diacylglycerol kinase-like"/>
    <property type="match status" value="1"/>
</dbReference>
<feature type="chain" id="PRO_1000079488" description="NAD kinase">
    <location>
        <begin position="1"/>
        <end position="284"/>
    </location>
</feature>
<feature type="active site" description="Proton acceptor" evidence="1">
    <location>
        <position position="61"/>
    </location>
</feature>
<feature type="binding site" evidence="1">
    <location>
        <begin position="61"/>
        <end position="62"/>
    </location>
    <ligand>
        <name>NAD(+)</name>
        <dbReference type="ChEBI" id="CHEBI:57540"/>
    </ligand>
</feature>
<feature type="binding site" evidence="1">
    <location>
        <position position="66"/>
    </location>
    <ligand>
        <name>NAD(+)</name>
        <dbReference type="ChEBI" id="CHEBI:57540"/>
    </ligand>
</feature>
<feature type="binding site" evidence="1">
    <location>
        <begin position="136"/>
        <end position="137"/>
    </location>
    <ligand>
        <name>NAD(+)</name>
        <dbReference type="ChEBI" id="CHEBI:57540"/>
    </ligand>
</feature>
<feature type="binding site" evidence="1">
    <location>
        <position position="147"/>
    </location>
    <ligand>
        <name>NAD(+)</name>
        <dbReference type="ChEBI" id="CHEBI:57540"/>
    </ligand>
</feature>
<feature type="binding site" evidence="1">
    <location>
        <position position="164"/>
    </location>
    <ligand>
        <name>NAD(+)</name>
        <dbReference type="ChEBI" id="CHEBI:57540"/>
    </ligand>
</feature>
<feature type="binding site" evidence="1">
    <location>
        <position position="166"/>
    </location>
    <ligand>
        <name>NAD(+)</name>
        <dbReference type="ChEBI" id="CHEBI:57540"/>
    </ligand>
</feature>
<feature type="binding site" evidence="1">
    <location>
        <position position="201"/>
    </location>
    <ligand>
        <name>NAD(+)</name>
        <dbReference type="ChEBI" id="CHEBI:57540"/>
    </ligand>
</feature>
<comment type="function">
    <text evidence="1">Involved in the regulation of the intracellular balance of NAD and NADP, and is a key enzyme in the biosynthesis of NADP. Catalyzes specifically the phosphorylation on 2'-hydroxyl of the adenosine moiety of NAD to yield NADP.</text>
</comment>
<comment type="catalytic activity">
    <reaction evidence="1">
        <text>NAD(+) + ATP = ADP + NADP(+) + H(+)</text>
        <dbReference type="Rhea" id="RHEA:18629"/>
        <dbReference type="ChEBI" id="CHEBI:15378"/>
        <dbReference type="ChEBI" id="CHEBI:30616"/>
        <dbReference type="ChEBI" id="CHEBI:57540"/>
        <dbReference type="ChEBI" id="CHEBI:58349"/>
        <dbReference type="ChEBI" id="CHEBI:456216"/>
        <dbReference type="EC" id="2.7.1.23"/>
    </reaction>
</comment>
<comment type="cofactor">
    <cofactor evidence="1">
        <name>a divalent metal cation</name>
        <dbReference type="ChEBI" id="CHEBI:60240"/>
    </cofactor>
</comment>
<comment type="subcellular location">
    <subcellularLocation>
        <location evidence="1">Cytoplasm</location>
    </subcellularLocation>
</comment>
<comment type="similarity">
    <text evidence="1">Belongs to the NAD kinase family.</text>
</comment>
<reference key="1">
    <citation type="submission" date="2007-05" db="EMBL/GenBank/DDBJ databases">
        <title>Complete sequence of Dehalococcoides sp. BAV1.</title>
        <authorList>
            <consortium name="US DOE Joint Genome Institute"/>
            <person name="Copeland A."/>
            <person name="Lucas S."/>
            <person name="Lapidus A."/>
            <person name="Barry K."/>
            <person name="Detter J.C."/>
            <person name="Glavina del Rio T."/>
            <person name="Hammon N."/>
            <person name="Israni S."/>
            <person name="Pitluck S."/>
            <person name="Lowry S."/>
            <person name="Clum A."/>
            <person name="Schmutz J."/>
            <person name="Larimer F."/>
            <person name="Land M."/>
            <person name="Hauser L."/>
            <person name="Kyrpides N."/>
            <person name="Kim E."/>
            <person name="Ritalahti K.M."/>
            <person name="Loeffler F."/>
            <person name="Richardson P."/>
        </authorList>
    </citation>
    <scope>NUCLEOTIDE SEQUENCE [LARGE SCALE GENOMIC DNA]</scope>
    <source>
        <strain>ATCC BAA-2100 / JCM 16839 / KCTC 5957 / BAV1</strain>
    </source>
</reference>
<organism>
    <name type="scientific">Dehalococcoides mccartyi (strain ATCC BAA-2100 / JCM 16839 / KCTC 5957 / BAV1)</name>
    <dbReference type="NCBI Taxonomy" id="216389"/>
    <lineage>
        <taxon>Bacteria</taxon>
        <taxon>Bacillati</taxon>
        <taxon>Chloroflexota</taxon>
        <taxon>Dehalococcoidia</taxon>
        <taxon>Dehalococcoidales</taxon>
        <taxon>Dehalococcoidaceae</taxon>
        <taxon>Dehalococcoides</taxon>
    </lineage>
</organism>
<accession>A5FS02</accession>